<reference key="1">
    <citation type="journal article" date="2016" name="Stand. Genomic Sci.">
        <title>Complete genome sequence of the Antarctic Halorubrum lacusprofundi type strain ACAM 34.</title>
        <authorList>
            <person name="Anderson I.J."/>
            <person name="DasSarma P."/>
            <person name="Lucas S."/>
            <person name="Copeland A."/>
            <person name="Lapidus A."/>
            <person name="Del Rio T.G."/>
            <person name="Tice H."/>
            <person name="Dalin E."/>
            <person name="Bruce D.C."/>
            <person name="Goodwin L."/>
            <person name="Pitluck S."/>
            <person name="Sims D."/>
            <person name="Brettin T.S."/>
            <person name="Detter J.C."/>
            <person name="Han C.S."/>
            <person name="Larimer F."/>
            <person name="Hauser L."/>
            <person name="Land M."/>
            <person name="Ivanova N."/>
            <person name="Richardson P."/>
            <person name="Cavicchioli R."/>
            <person name="DasSarma S."/>
            <person name="Woese C.R."/>
            <person name="Kyrpides N.C."/>
        </authorList>
    </citation>
    <scope>NUCLEOTIDE SEQUENCE [LARGE SCALE GENOMIC DNA]</scope>
    <source>
        <strain>ATCC 49239 / DSM 5036 / JCM 8891 / ACAM 34</strain>
    </source>
</reference>
<organism>
    <name type="scientific">Halorubrum lacusprofundi (strain ATCC 49239 / DSM 5036 / JCM 8891 / ACAM 34)</name>
    <dbReference type="NCBI Taxonomy" id="416348"/>
    <lineage>
        <taxon>Archaea</taxon>
        <taxon>Methanobacteriati</taxon>
        <taxon>Methanobacteriota</taxon>
        <taxon>Stenosarchaea group</taxon>
        <taxon>Halobacteria</taxon>
        <taxon>Halobacteriales</taxon>
        <taxon>Haloferacaceae</taxon>
        <taxon>Halorubrum</taxon>
    </lineage>
</organism>
<proteinExistence type="inferred from homology"/>
<dbReference type="EMBL" id="CP001365">
    <property type="protein sequence ID" value="ACM57895.1"/>
    <property type="molecule type" value="Genomic_DNA"/>
</dbReference>
<dbReference type="RefSeq" id="WP_015911016.1">
    <property type="nucleotide sequence ID" value="NC_012029.1"/>
</dbReference>
<dbReference type="GeneID" id="7401936"/>
<dbReference type="KEGG" id="hla:Hlac_2319"/>
<dbReference type="eggNOG" id="arCOG04477">
    <property type="taxonomic scope" value="Archaea"/>
</dbReference>
<dbReference type="HOGENOM" id="CLU_121764_0_0_2"/>
<dbReference type="Proteomes" id="UP000000740">
    <property type="component" value="Chromosome 1"/>
</dbReference>
<dbReference type="HAMAP" id="MF_00498">
    <property type="entry name" value="UPF0179"/>
    <property type="match status" value="1"/>
</dbReference>
<dbReference type="InterPro" id="IPR005369">
    <property type="entry name" value="UPF0179"/>
</dbReference>
<dbReference type="PANTHER" id="PTHR40699">
    <property type="entry name" value="UPF0179 PROTEIN MJ1627"/>
    <property type="match status" value="1"/>
</dbReference>
<dbReference type="PANTHER" id="PTHR40699:SF1">
    <property type="entry name" value="UPF0179 PROTEIN MJ1627"/>
    <property type="match status" value="1"/>
</dbReference>
<dbReference type="Pfam" id="PF03684">
    <property type="entry name" value="UPF0179"/>
    <property type="match status" value="1"/>
</dbReference>
<evidence type="ECO:0000255" key="1">
    <source>
        <dbReference type="HAMAP-Rule" id="MF_00498"/>
    </source>
</evidence>
<protein>
    <recommendedName>
        <fullName evidence="1">UPF0179 protein Hlac_2319</fullName>
    </recommendedName>
</protein>
<name>Y2319_HALLT</name>
<comment type="similarity">
    <text evidence="1">Belongs to the UPF0179 family.</text>
</comment>
<feature type="chain" id="PRO_0000378114" description="UPF0179 protein Hlac_2319">
    <location>
        <begin position="1"/>
        <end position="149"/>
    </location>
</feature>
<gene>
    <name type="ordered locus">Hlac_2319</name>
</gene>
<accession>B9LS21</accession>
<keyword id="KW-1185">Reference proteome</keyword>
<sequence length="149" mass="16051">MTTVTLIGTRLADTGREFVYQGESPDCEGCPYRSQCLNLSEGTRYRVTGIRENAQTLDCAVHDAGVRAVEVEPAPVPANVLSKQAYAGGRVSLAGPCPHTECPSHGYCVPDGADFDDERVIDQVLGEPPHDVCALDRDLTLVEFRAEDG</sequence>